<proteinExistence type="inferred from homology"/>
<sequence length="508" mass="56055">MGLPWYRVHTVVLNDPGRLLSVHIMHTALVAGWAGSMALYELAVFDPSDPVLDPMWRQGMFVIPFMTRLGITNSWGGWNITGGTITNPGLWSYEGVAGAHIVFSGLCFLAAIWHWVYWDLEIFCDERTGKPSLDLPKIFGIHLFLSGVACFGFGAFHVTGLYGPGIWVSDPYGLTGKVQPVNPAWGVEGFDPFVPGGIASHHIAAGTLGILAGLFHLSVRPPQRLYKGLRMGNIETVLSSSIAAVFFAAFVVAGTMWYGSATTPIELFGPTRYQWDQGYFQQEIYRRVSAGLAENQSLSDAWSKIPEKLAFYDYIGNNPAKGGLFRAGSMDNGDGIAVGWLGHPVFRNKEGRELFVRRMPTFFETFPVVLVDGDGIVRADVPFRRAESKYSVEQVGVTVEFYGGELNGVSYSDPATVKKYARRAQLGEIFELDRATLKSDGVFRSSPRGWFTFGHASFALLFFFGHIWHGARTLFRDVFAGIDPDLDAQVEFGAFQKLGDPTTKRQAV</sequence>
<gene>
    <name evidence="1" type="primary">psbB</name>
</gene>
<reference key="1">
    <citation type="submission" date="2007-03" db="EMBL/GenBank/DDBJ databases">
        <title>Sequence analysis of Arabidopsis pumila JS2 chloroplast DNA.</title>
        <authorList>
            <person name="Hosouchi T."/>
            <person name="Tsuruoka H."/>
            <person name="Kotani H."/>
        </authorList>
    </citation>
    <scope>NUCLEOTIDE SEQUENCE [LARGE SCALE GENOMIC DNA]</scope>
</reference>
<name>PSBB_OLIPU</name>
<organism>
    <name type="scientific">Olimarabidopsis pumila</name>
    <name type="common">Dwarf rocket</name>
    <name type="synonym">Arabidopsis griffithiana</name>
    <dbReference type="NCBI Taxonomy" id="74718"/>
    <lineage>
        <taxon>Eukaryota</taxon>
        <taxon>Viridiplantae</taxon>
        <taxon>Streptophyta</taxon>
        <taxon>Embryophyta</taxon>
        <taxon>Tracheophyta</taxon>
        <taxon>Spermatophyta</taxon>
        <taxon>Magnoliopsida</taxon>
        <taxon>eudicotyledons</taxon>
        <taxon>Gunneridae</taxon>
        <taxon>Pentapetalae</taxon>
        <taxon>rosids</taxon>
        <taxon>malvids</taxon>
        <taxon>Brassicales</taxon>
        <taxon>Brassicaceae</taxon>
        <taxon>Alyssopsideae</taxon>
        <taxon>Olimarabidopsis</taxon>
    </lineage>
</organism>
<geneLocation type="chloroplast"/>
<accession>A4QJV7</accession>
<comment type="function">
    <text evidence="1">One of the components of the core complex of photosystem II (PSII). It binds chlorophyll and helps catalyze the primary light-induced photochemical processes of PSII. PSII is a light-driven water:plastoquinone oxidoreductase, using light energy to abstract electrons from H(2)O, generating O(2) and a proton gradient subsequently used for ATP formation.</text>
</comment>
<comment type="cofactor">
    <text evidence="1">Binds multiple chlorophylls. PSII binds additional chlorophylls, carotenoids and specific lipids.</text>
</comment>
<comment type="subunit">
    <text evidence="1">PSII is composed of 1 copy each of membrane proteins PsbA, PsbB, PsbC, PsbD, PsbE, PsbF, PsbH, PsbI, PsbJ, PsbK, PsbL, PsbM, PsbT, PsbX, PsbY, PsbZ, Psb30/Ycf12, at least 3 peripheral proteins of the oxygen-evolving complex and a large number of cofactors. It forms dimeric complexes.</text>
</comment>
<comment type="subcellular location">
    <subcellularLocation>
        <location evidence="1">Plastid</location>
        <location evidence="1">Chloroplast thylakoid membrane</location>
        <topology evidence="1">Multi-pass membrane protein</topology>
    </subcellularLocation>
</comment>
<comment type="similarity">
    <text evidence="1">Belongs to the PsbB/PsbC family. PsbB subfamily.</text>
</comment>
<evidence type="ECO:0000255" key="1">
    <source>
        <dbReference type="HAMAP-Rule" id="MF_01495"/>
    </source>
</evidence>
<feature type="chain" id="PRO_0000359850" description="Photosystem II CP47 reaction center protein">
    <location>
        <begin position="1"/>
        <end position="508"/>
    </location>
</feature>
<feature type="transmembrane region" description="Helical" evidence="1">
    <location>
        <begin position="21"/>
        <end position="36"/>
    </location>
</feature>
<feature type="transmembrane region" description="Helical" evidence="1">
    <location>
        <begin position="101"/>
        <end position="115"/>
    </location>
</feature>
<feature type="transmembrane region" description="Helical" evidence="1">
    <location>
        <begin position="140"/>
        <end position="156"/>
    </location>
</feature>
<feature type="transmembrane region" description="Helical" evidence="1">
    <location>
        <begin position="203"/>
        <end position="218"/>
    </location>
</feature>
<feature type="transmembrane region" description="Helical" evidence="1">
    <location>
        <begin position="237"/>
        <end position="252"/>
    </location>
</feature>
<feature type="transmembrane region" description="Helical" evidence="1">
    <location>
        <begin position="457"/>
        <end position="472"/>
    </location>
</feature>
<dbReference type="EMBL" id="AP009368">
    <property type="protein sequence ID" value="BAF49965.1"/>
    <property type="molecule type" value="Genomic_DNA"/>
</dbReference>
<dbReference type="RefSeq" id="YP_001123141.1">
    <property type="nucleotide sequence ID" value="NC_009267.1"/>
</dbReference>
<dbReference type="SMR" id="A4QJV7"/>
<dbReference type="GeneID" id="4962425"/>
<dbReference type="GO" id="GO:0009535">
    <property type="term" value="C:chloroplast thylakoid membrane"/>
    <property type="evidence" value="ECO:0007669"/>
    <property type="project" value="UniProtKB-SubCell"/>
</dbReference>
<dbReference type="GO" id="GO:0009523">
    <property type="term" value="C:photosystem II"/>
    <property type="evidence" value="ECO:0007669"/>
    <property type="project" value="UniProtKB-KW"/>
</dbReference>
<dbReference type="GO" id="GO:0016168">
    <property type="term" value="F:chlorophyll binding"/>
    <property type="evidence" value="ECO:0007669"/>
    <property type="project" value="UniProtKB-UniRule"/>
</dbReference>
<dbReference type="GO" id="GO:0045156">
    <property type="term" value="F:electron transporter, transferring electrons within the cyclic electron transport pathway of photosynthesis activity"/>
    <property type="evidence" value="ECO:0007669"/>
    <property type="project" value="InterPro"/>
</dbReference>
<dbReference type="GO" id="GO:0009772">
    <property type="term" value="P:photosynthetic electron transport in photosystem II"/>
    <property type="evidence" value="ECO:0007669"/>
    <property type="project" value="InterPro"/>
</dbReference>
<dbReference type="FunFam" id="3.10.680.10:FF:000001">
    <property type="entry name" value="Photosystem II CP47 reaction center protein"/>
    <property type="match status" value="1"/>
</dbReference>
<dbReference type="Gene3D" id="3.10.680.10">
    <property type="entry name" value="Photosystem II CP47 reaction center protein"/>
    <property type="match status" value="1"/>
</dbReference>
<dbReference type="HAMAP" id="MF_01495">
    <property type="entry name" value="PSII_PsbB_CP47"/>
    <property type="match status" value="1"/>
</dbReference>
<dbReference type="InterPro" id="IPR000932">
    <property type="entry name" value="PS_antenna-like"/>
</dbReference>
<dbReference type="InterPro" id="IPR036001">
    <property type="entry name" value="PS_II_antenna-like_sf"/>
</dbReference>
<dbReference type="InterPro" id="IPR017486">
    <property type="entry name" value="PSII_PsbB"/>
</dbReference>
<dbReference type="NCBIfam" id="TIGR03039">
    <property type="entry name" value="PS_II_CP47"/>
    <property type="match status" value="1"/>
</dbReference>
<dbReference type="PANTHER" id="PTHR33180">
    <property type="entry name" value="PHOTOSYSTEM II CP43 REACTION CENTER PROTEIN"/>
    <property type="match status" value="1"/>
</dbReference>
<dbReference type="PANTHER" id="PTHR33180:SF38">
    <property type="entry name" value="PHOTOSYSTEM II CP47 REACTION CENTER PROTEIN"/>
    <property type="match status" value="1"/>
</dbReference>
<dbReference type="Pfam" id="PF00421">
    <property type="entry name" value="PSII"/>
    <property type="match status" value="1"/>
</dbReference>
<dbReference type="SUPFAM" id="SSF161077">
    <property type="entry name" value="Photosystem II antenna protein-like"/>
    <property type="match status" value="1"/>
</dbReference>
<protein>
    <recommendedName>
        <fullName evidence="1">Photosystem II CP47 reaction center protein</fullName>
    </recommendedName>
    <alternativeName>
        <fullName evidence="1">PSII 47 kDa protein</fullName>
    </alternativeName>
    <alternativeName>
        <fullName evidence="1">Protein CP-47</fullName>
    </alternativeName>
</protein>
<keyword id="KW-0148">Chlorophyll</keyword>
<keyword id="KW-0150">Chloroplast</keyword>
<keyword id="KW-0157">Chromophore</keyword>
<keyword id="KW-0472">Membrane</keyword>
<keyword id="KW-0602">Photosynthesis</keyword>
<keyword id="KW-0604">Photosystem II</keyword>
<keyword id="KW-0934">Plastid</keyword>
<keyword id="KW-0793">Thylakoid</keyword>
<keyword id="KW-0812">Transmembrane</keyword>
<keyword id="KW-1133">Transmembrane helix</keyword>